<sequence length="339" mass="37405">MSNRKLFTPWSLKGVTLKNRIVMSPMCMYSSHEKDGKVQPFHMTHYISRAVGQVGLIMVEATAVTPQGRISDQDLGIWDDAHIDGLAALTSQIKTYGSKTAIQLAHAGRKAEVEGTIYGPSAIPFDENSRTPVEMTKEDIKETVQAFKKGAERAKAAGFDIIEIHGAHGYLINEFLSPLSNKREDEYGGSPENRYRLLREVIDAVKEVWAGPLFVRVSASDYKTKGLDVADYVGFAKWMKEQGVDLIDVSSGAVVPADINVFPGYQVGFADTIRAQAEIQTGAVGLITSGLQAEEILQNGRADLIFVARELLRDPYWPKTAAKQLNTKIEGPVQYDRAW</sequence>
<name>NAMA_BACLD</name>
<gene>
    <name evidence="1" type="primary">namA</name>
    <name type="ordered locus">BLi02551</name>
    <name type="ordered locus">BL00797</name>
</gene>
<dbReference type="EC" id="1.6.99.1" evidence="1"/>
<dbReference type="EMBL" id="AE017333">
    <property type="protein sequence ID" value="AAU41425.1"/>
    <property type="molecule type" value="Genomic_DNA"/>
</dbReference>
<dbReference type="EMBL" id="CP000002">
    <property type="protein sequence ID" value="AAU24067.1"/>
    <property type="molecule type" value="Genomic_DNA"/>
</dbReference>
<dbReference type="SMR" id="Q65HN9"/>
<dbReference type="STRING" id="279010.BL00797"/>
<dbReference type="KEGG" id="bld:BLi02551"/>
<dbReference type="KEGG" id="bli:BL00797"/>
<dbReference type="PATRIC" id="fig|279010.13.peg.2585"/>
<dbReference type="eggNOG" id="COG1902">
    <property type="taxonomic scope" value="Bacteria"/>
</dbReference>
<dbReference type="HOGENOM" id="CLU_012153_2_1_9"/>
<dbReference type="Proteomes" id="UP000000606">
    <property type="component" value="Chromosome"/>
</dbReference>
<dbReference type="GO" id="GO:0010181">
    <property type="term" value="F:FMN binding"/>
    <property type="evidence" value="ECO:0007669"/>
    <property type="project" value="UniProtKB-UniRule"/>
</dbReference>
<dbReference type="GO" id="GO:0050661">
    <property type="term" value="F:NADP binding"/>
    <property type="evidence" value="ECO:0007669"/>
    <property type="project" value="UniProtKB-UniRule"/>
</dbReference>
<dbReference type="GO" id="GO:0003959">
    <property type="term" value="F:NADPH dehydrogenase activity"/>
    <property type="evidence" value="ECO:0007669"/>
    <property type="project" value="UniProtKB-UniRule"/>
</dbReference>
<dbReference type="GO" id="GO:0009636">
    <property type="term" value="P:response to toxic substance"/>
    <property type="evidence" value="ECO:0007669"/>
    <property type="project" value="UniProtKB-KW"/>
</dbReference>
<dbReference type="CDD" id="cd02932">
    <property type="entry name" value="OYE_YqiM_FMN"/>
    <property type="match status" value="1"/>
</dbReference>
<dbReference type="Gene3D" id="3.20.20.70">
    <property type="entry name" value="Aldolase class I"/>
    <property type="match status" value="1"/>
</dbReference>
<dbReference type="HAMAP" id="MF_01614">
    <property type="entry name" value="NamA"/>
    <property type="match status" value="1"/>
</dbReference>
<dbReference type="InterPro" id="IPR013785">
    <property type="entry name" value="Aldolase_TIM"/>
</dbReference>
<dbReference type="InterPro" id="IPR023663">
    <property type="entry name" value="NADPH_DH_bac"/>
</dbReference>
<dbReference type="InterPro" id="IPR001155">
    <property type="entry name" value="OxRdtase_FMN_N"/>
</dbReference>
<dbReference type="InterPro" id="IPR044152">
    <property type="entry name" value="YqjM-like"/>
</dbReference>
<dbReference type="NCBIfam" id="NF010047">
    <property type="entry name" value="PRK13523.1"/>
    <property type="match status" value="1"/>
</dbReference>
<dbReference type="PANTHER" id="PTHR43303">
    <property type="entry name" value="NADPH DEHYDROGENASE C23G7.10C-RELATED"/>
    <property type="match status" value="1"/>
</dbReference>
<dbReference type="PANTHER" id="PTHR43303:SF4">
    <property type="entry name" value="NADPH DEHYDROGENASE C23G7.10C-RELATED"/>
    <property type="match status" value="1"/>
</dbReference>
<dbReference type="Pfam" id="PF00724">
    <property type="entry name" value="Oxidored_FMN"/>
    <property type="match status" value="1"/>
</dbReference>
<dbReference type="SUPFAM" id="SSF51395">
    <property type="entry name" value="FMN-linked oxidoreductases"/>
    <property type="match status" value="1"/>
</dbReference>
<protein>
    <recommendedName>
        <fullName evidence="1">NADPH dehydrogenase</fullName>
        <ecNumber evidence="1">1.6.99.1</ecNumber>
    </recommendedName>
</protein>
<feature type="chain" id="PRO_0000216118" description="NADPH dehydrogenase">
    <location>
        <begin position="1"/>
        <end position="339"/>
    </location>
</feature>
<feature type="binding site" evidence="1">
    <location>
        <begin position="24"/>
        <end position="27"/>
    </location>
    <ligand>
        <name>FMN</name>
        <dbReference type="ChEBI" id="CHEBI:58210"/>
    </ligand>
</feature>
<feature type="binding site" evidence="1">
    <location>
        <position position="29"/>
    </location>
    <ligand>
        <name>substrate</name>
    </ligand>
</feature>
<feature type="binding site" evidence="1">
    <location>
        <position position="61"/>
    </location>
    <ligand>
        <name>FMN</name>
        <dbReference type="ChEBI" id="CHEBI:58210"/>
    </ligand>
</feature>
<feature type="binding site" evidence="1">
    <location>
        <position position="103"/>
    </location>
    <ligand>
        <name>FMN</name>
        <dbReference type="ChEBI" id="CHEBI:58210"/>
    </ligand>
</feature>
<feature type="binding site" evidence="1">
    <location>
        <begin position="165"/>
        <end position="168"/>
    </location>
    <ligand>
        <name>substrate</name>
    </ligand>
</feature>
<feature type="binding site" evidence="1">
    <location>
        <position position="216"/>
    </location>
    <ligand>
        <name>FMN</name>
        <dbReference type="ChEBI" id="CHEBI:58210"/>
    </ligand>
</feature>
<feature type="binding site" evidence="1">
    <location>
        <begin position="308"/>
        <end position="309"/>
    </location>
    <ligand>
        <name>FMN</name>
        <dbReference type="ChEBI" id="CHEBI:58210"/>
    </ligand>
</feature>
<organism>
    <name type="scientific">Bacillus licheniformis (strain ATCC 14580 / DSM 13 / JCM 2505 / CCUG 7422 / NBRC 12200 / NCIMB 9375 / NCTC 10341 / NRRL NRS-1264 / Gibson 46)</name>
    <dbReference type="NCBI Taxonomy" id="279010"/>
    <lineage>
        <taxon>Bacteria</taxon>
        <taxon>Bacillati</taxon>
        <taxon>Bacillota</taxon>
        <taxon>Bacilli</taxon>
        <taxon>Bacillales</taxon>
        <taxon>Bacillaceae</taxon>
        <taxon>Bacillus</taxon>
    </lineage>
</organism>
<evidence type="ECO:0000255" key="1">
    <source>
        <dbReference type="HAMAP-Rule" id="MF_01614"/>
    </source>
</evidence>
<keyword id="KW-0216">Detoxification</keyword>
<keyword id="KW-0285">Flavoprotein</keyword>
<keyword id="KW-0288">FMN</keyword>
<keyword id="KW-0521">NADP</keyword>
<keyword id="KW-0560">Oxidoreductase</keyword>
<keyword id="KW-1185">Reference proteome</keyword>
<accession>Q65HN9</accession>
<accession>Q62T42</accession>
<proteinExistence type="inferred from homology"/>
<reference key="1">
    <citation type="journal article" date="2004" name="J. Mol. Microbiol. Biotechnol.">
        <title>The complete genome sequence of Bacillus licheniformis DSM13, an organism with great industrial potential.</title>
        <authorList>
            <person name="Veith B."/>
            <person name="Herzberg C."/>
            <person name="Steckel S."/>
            <person name="Feesche J."/>
            <person name="Maurer K.H."/>
            <person name="Ehrenreich P."/>
            <person name="Baeumer S."/>
            <person name="Henne A."/>
            <person name="Liesegang H."/>
            <person name="Merkl R."/>
            <person name="Ehrenreich A."/>
            <person name="Gottschalk G."/>
        </authorList>
    </citation>
    <scope>NUCLEOTIDE SEQUENCE [LARGE SCALE GENOMIC DNA]</scope>
    <source>
        <strain>ATCC 14580 / DSM 13 / JCM 2505 / CCUG 7422 / NBRC 12200 / NCIMB 9375 / NCTC 10341 / NRRL NRS-1264 / Gibson 46</strain>
    </source>
</reference>
<reference key="2">
    <citation type="journal article" date="2004" name="Genome Biol.">
        <title>Complete genome sequence of the industrial bacterium Bacillus licheniformis and comparisons with closely related Bacillus species.</title>
        <authorList>
            <person name="Rey M.W."/>
            <person name="Ramaiya P."/>
            <person name="Nelson B.A."/>
            <person name="Brody-Karpin S.D."/>
            <person name="Zaretsky E.J."/>
            <person name="Tang M."/>
            <person name="Lopez de Leon A."/>
            <person name="Xiang H."/>
            <person name="Gusti V."/>
            <person name="Clausen I.G."/>
            <person name="Olsen P.B."/>
            <person name="Rasmussen M.D."/>
            <person name="Andersen J.T."/>
            <person name="Joergensen P.L."/>
            <person name="Larsen T.S."/>
            <person name="Sorokin A."/>
            <person name="Bolotin A."/>
            <person name="Lapidus A."/>
            <person name="Galleron N."/>
            <person name="Ehrlich S.D."/>
            <person name="Berka R.M."/>
        </authorList>
    </citation>
    <scope>NUCLEOTIDE SEQUENCE [LARGE SCALE GENOMIC DNA]</scope>
    <source>
        <strain>ATCC 14580 / DSM 13 / JCM 2505 / CCUG 7422 / NBRC 12200 / NCIMB 9375 / NCTC 10341 / NRRL NRS-1264 / Gibson 46</strain>
    </source>
</reference>
<comment type="function">
    <text evidence="1">Catalyzes the reduction of the double bond of an array of alpha,beta-unsaturated aldehydes and ketones. It also reduces the nitro group of nitroester and nitroaromatic compounds. It could have a role in detoxification processes.</text>
</comment>
<comment type="catalytic activity">
    <reaction evidence="1">
        <text>A + NADPH + H(+) = AH2 + NADP(+)</text>
        <dbReference type="Rhea" id="RHEA:13149"/>
        <dbReference type="ChEBI" id="CHEBI:13193"/>
        <dbReference type="ChEBI" id="CHEBI:15378"/>
        <dbReference type="ChEBI" id="CHEBI:17499"/>
        <dbReference type="ChEBI" id="CHEBI:57783"/>
        <dbReference type="ChEBI" id="CHEBI:58349"/>
        <dbReference type="EC" id="1.6.99.1"/>
    </reaction>
</comment>
<comment type="cofactor">
    <cofactor evidence="1">
        <name>FMN</name>
        <dbReference type="ChEBI" id="CHEBI:58210"/>
    </cofactor>
</comment>
<comment type="subunit">
    <text evidence="1">Homotetramer.</text>
</comment>
<comment type="similarity">
    <text evidence="1">Belongs to the NADH:flavin oxidoreductase/NADH oxidase family. NamA subfamily.</text>
</comment>